<feature type="chain" id="PRO_0000066839" description="Parabutoporin" evidence="5">
    <location>
        <begin position="1"/>
        <end position="45"/>
    </location>
</feature>
<feature type="unsure residue" evidence="5">
    <location>
        <position position="11"/>
    </location>
</feature>
<feature type="unsure residue" evidence="5">
    <location>
        <position position="44"/>
    </location>
</feature>
<feature type="unsure residue" evidence="5">
    <location>
        <position position="45"/>
    </location>
</feature>
<protein>
    <recommendedName>
        <fullName evidence="6 7">Parabutoporin</fullName>
        <shortName evidence="7">PP</shortName>
    </recommendedName>
    <alternativeName>
        <fullName evidence="9">Non-disulfide-bridged peptide 2.5</fullName>
        <shortName evidence="9">NDBP-2.5</shortName>
    </alternativeName>
    <alternativeName>
        <fullName evidence="8">Non-disulfide-bridged peptide 3.2</fullName>
        <shortName evidence="8">NDBP-3.2</shortName>
    </alternativeName>
</protein>
<dbReference type="SMR" id="P83312"/>
<dbReference type="IntAct" id="P83312">
    <property type="interactions" value="4"/>
</dbReference>
<dbReference type="MINT" id="P83312"/>
<dbReference type="GO" id="GO:0005576">
    <property type="term" value="C:extracellular region"/>
    <property type="evidence" value="ECO:0007669"/>
    <property type="project" value="UniProtKB-SubCell"/>
</dbReference>
<dbReference type="GO" id="GO:0016020">
    <property type="term" value="C:membrane"/>
    <property type="evidence" value="ECO:0007669"/>
    <property type="project" value="UniProtKB-KW"/>
</dbReference>
<dbReference type="GO" id="GO:0044218">
    <property type="term" value="C:other organism cell membrane"/>
    <property type="evidence" value="ECO:0007669"/>
    <property type="project" value="UniProtKB-KW"/>
</dbReference>
<dbReference type="GO" id="GO:0090729">
    <property type="term" value="F:toxin activity"/>
    <property type="evidence" value="ECO:0007669"/>
    <property type="project" value="UniProtKB-KW"/>
</dbReference>
<dbReference type="GO" id="GO:0042742">
    <property type="term" value="P:defense response to bacterium"/>
    <property type="evidence" value="ECO:0007669"/>
    <property type="project" value="UniProtKB-KW"/>
</dbReference>
<dbReference type="GO" id="GO:0050832">
    <property type="term" value="P:defense response to fungus"/>
    <property type="evidence" value="ECO:0007669"/>
    <property type="project" value="UniProtKB-KW"/>
</dbReference>
<dbReference type="GO" id="GO:0031640">
    <property type="term" value="P:killing of cells of another organism"/>
    <property type="evidence" value="ECO:0007669"/>
    <property type="project" value="UniProtKB-KW"/>
</dbReference>
<dbReference type="GO" id="GO:0006811">
    <property type="term" value="P:monoatomic ion transport"/>
    <property type="evidence" value="ECO:0007669"/>
    <property type="project" value="UniProtKB-KW"/>
</dbReference>
<sequence length="45" mass="4995">FKLGSFLKKAWKSKLAKKLRAKGKEMLKDYAKGLLEGGSEEVPGQ</sequence>
<name>NDB25_PARSC</name>
<keyword id="KW-0044">Antibiotic</keyword>
<keyword id="KW-0929">Antimicrobial</keyword>
<keyword id="KW-0204">Cytolysis</keyword>
<keyword id="KW-0903">Direct protein sequencing</keyword>
<keyword id="KW-0295">Fungicide</keyword>
<keyword id="KW-0354">Hemolysis</keyword>
<keyword id="KW-0406">Ion transport</keyword>
<keyword id="KW-0472">Membrane</keyword>
<keyword id="KW-0964">Secreted</keyword>
<keyword id="KW-1052">Target cell membrane</keyword>
<keyword id="KW-1053">Target membrane</keyword>
<keyword id="KW-0800">Toxin</keyword>
<keyword id="KW-0812">Transmembrane</keyword>
<keyword id="KW-0813">Transport</keyword>
<proteinExistence type="evidence at protein level"/>
<evidence type="ECO:0000269" key="1">
    <source>
    </source>
</evidence>
<evidence type="ECO:0000269" key="2">
    <source>
    </source>
</evidence>
<evidence type="ECO:0000269" key="3">
    <source>
    </source>
</evidence>
<evidence type="ECO:0000269" key="4">
    <source>
    </source>
</evidence>
<evidence type="ECO:0000269" key="5">
    <source ref="1"/>
</evidence>
<evidence type="ECO:0000303" key="6">
    <source>
    </source>
</evidence>
<evidence type="ECO:0000303" key="7">
    <source>
    </source>
</evidence>
<evidence type="ECO:0000303" key="8">
    <source>
    </source>
</evidence>
<evidence type="ECO:0000303" key="9">
    <source>
    </source>
</evidence>
<evidence type="ECO:0000305" key="10"/>
<organism>
    <name type="scientific">Parabuthus schlechteri</name>
    <name type="common">Scorpion</name>
    <dbReference type="NCBI Taxonomy" id="190110"/>
    <lineage>
        <taxon>Eukaryota</taxon>
        <taxon>Metazoa</taxon>
        <taxon>Ecdysozoa</taxon>
        <taxon>Arthropoda</taxon>
        <taxon>Chelicerata</taxon>
        <taxon>Arachnida</taxon>
        <taxon>Scorpiones</taxon>
        <taxon>Buthida</taxon>
        <taxon>Buthoidea</taxon>
        <taxon>Buthidae</taxon>
        <taxon>Parabuthus</taxon>
    </lineage>
</organism>
<comment type="function">
    <text evidence="1 2 3 4 5">At high concentrations, acts as a pore former in cellular membranes and causes the leakage of the cells. At submicromolar concentrations, degranulates granulocytes and has a weak hemolytic activity against human red blood cells. Also strongly inhibits the production of superoxide anions. Has a strong antibacterial activity against Gram-negative bacteria but is less active against Gram-positive bacteria. Also has antifungal activity. Induces reversible G-protein dependent Ca(2+) release from intracellular stores and increase Ca(2+) influx in HL-60 cells. Induces the activation of the Rac pathway in granulocytes. Synergistically enhances the excitatory effects of short and long chain ion-channel-specific neurotoxins by interaction with the neuronal membranes.</text>
</comment>
<comment type="subunit">
    <text evidence="5">Monomer and homodimer.</text>
</comment>
<comment type="subcellular location">
    <subcellularLocation>
        <location evidence="5">Secreted</location>
    </subcellularLocation>
    <subcellularLocation>
        <location evidence="1 2">Target cell membrane</location>
    </subcellularLocation>
    <text evidence="1 2">Forms a helical membrane channel in the prey.</text>
</comment>
<comment type="tissue specificity">
    <text evidence="5">Expressed by the venom gland.</text>
</comment>
<comment type="mass spectrometry" mass="5030.3" method="MALDI" evidence="5"/>
<comment type="similarity">
    <text evidence="10">Belongs to the non-disulfide-bridged peptide (NDBP) superfamily. Long chain multifunctional peptide (group 2) family.</text>
</comment>
<reference key="1">
    <citation type="journal article" date="2000" name="Cimbebasia">
        <title>A novel class of pore-forming peptides in the venom of Parabuthus schlechteri Purcell (Scorpions: Buthidae).</title>
        <authorList>
            <person name="Verdonck F."/>
            <person name="Bosteels S."/>
            <person name="Desmet J."/>
            <person name="Moerman L.F.A."/>
            <person name="Noppe W."/>
            <person name="Willems J."/>
            <person name="Tytgat J."/>
            <person name="van der Walt J."/>
        </authorList>
    </citation>
    <scope>PROTEIN SEQUENCE</scope>
    <scope>FUNCTION</scope>
    <scope>SUBUNIT</scope>
    <scope>SUBCELLULAR LOCATION</scope>
    <scope>TISSUE SPECIFICITY</scope>
    <scope>MASS SPECTROMETRY</scope>
    <source>
        <tissue>Venom</tissue>
    </source>
</reference>
<reference key="2">
    <citation type="journal article" date="2002" name="Eur. J. Biochem.">
        <title>Antibacterial and antifungal properties of alpha-helical, cationic peptides in the venom of scorpions from southern Africa.</title>
        <authorList>
            <person name="Moerman L.F.A."/>
            <person name="Bosteels S."/>
            <person name="Noppe W."/>
            <person name="Willems J."/>
            <person name="Clynen E."/>
            <person name="Schoofs L."/>
            <person name="Thevissen K."/>
            <person name="Tytgat J."/>
            <person name="Van Eldere J."/>
            <person name="van der Walt J."/>
            <person name="Verdonck F."/>
        </authorList>
    </citation>
    <scope>FUNCTION</scope>
    <scope>CIRCULAR DICHROISM ANALYSIS</scope>
    <scope>SYNTHESIS</scope>
    <source>
        <tissue>Venom</tissue>
    </source>
</reference>
<reference key="3">
    <citation type="journal article" date="2002" name="Toxicon">
        <title>Cationic peptides from scorpion venom can stimulate and inhibit polymorphonuclear granulocytes.</title>
        <authorList>
            <person name="Willems J."/>
            <person name="Noppe W."/>
            <person name="Moerman L."/>
            <person name="van der Walt J."/>
            <person name="Verdonck F."/>
        </authorList>
    </citation>
    <scope>FUNCTION</scope>
    <scope>SUBCELLULAR LOCATION</scope>
    <scope>SYNTHESIS</scope>
    <scope>CIRCULAR DICHROISM ANALYSIS</scope>
    <source>
        <tissue>Venom</tissue>
    </source>
</reference>
<reference key="4">
    <citation type="journal article" date="2003" name="Biochem. Biophys. Res. Commun.">
        <title>Antimicrobial peptides from scorpion venom induce Ca(2+) signaling in HL-60 cells.</title>
        <authorList>
            <person name="Moerman L."/>
            <person name="Verdonck F."/>
            <person name="Willems J."/>
            <person name="Tytgat J."/>
            <person name="Bosteels S."/>
        </authorList>
    </citation>
    <scope>FUNCTION</scope>
</reference>
<reference key="5">
    <citation type="journal article" date="2004" name="Peptides">
        <title>Parabutoporin -- an antibiotic peptide from scorpion venom -- can both induce activation and inhibition of granulocyte cell functions.</title>
        <authorList>
            <person name="Willems J."/>
            <person name="Moerman L."/>
            <person name="Bosteels S."/>
            <person name="Bruyneel E."/>
            <person name="Ryniers F."/>
            <person name="Verdonck F."/>
        </authorList>
    </citation>
    <scope>FUNCTION</scope>
</reference>
<reference key="6">
    <citation type="journal article" date="2005" name="IUBMB Life">
        <title>Scorpion venom peptides without disulfide bridges.</title>
        <authorList>
            <person name="Zeng X.C."/>
            <person name="Corzo G."/>
            <person name="Hahin R."/>
        </authorList>
    </citation>
    <scope>NOMENCLATURE</scope>
</reference>
<reference key="7">
    <citation type="journal article" date="2014" name="Peptides">
        <title>Scorpion venom peptides with no disulfide bridges: a review.</title>
        <authorList>
            <person name="Almaaytah A."/>
            <person name="Albalas Q."/>
        </authorList>
    </citation>
    <scope>NOMENCLATURE</scope>
</reference>
<accession>P83312</accession>